<proteinExistence type="inferred from homology"/>
<name>THII_STRMU</name>
<organism>
    <name type="scientific">Streptococcus mutans serotype c (strain ATCC 700610 / UA159)</name>
    <dbReference type="NCBI Taxonomy" id="210007"/>
    <lineage>
        <taxon>Bacteria</taxon>
        <taxon>Bacillati</taxon>
        <taxon>Bacillota</taxon>
        <taxon>Bacilli</taxon>
        <taxon>Lactobacillales</taxon>
        <taxon>Streptococcaceae</taxon>
        <taxon>Streptococcus</taxon>
    </lineage>
</organism>
<protein>
    <recommendedName>
        <fullName evidence="1">Probable tRNA sulfurtransferase</fullName>
        <ecNumber evidence="1">2.8.1.4</ecNumber>
    </recommendedName>
    <alternativeName>
        <fullName evidence="1">Sulfur carrier protein ThiS sulfurtransferase</fullName>
    </alternativeName>
    <alternativeName>
        <fullName evidence="1">Thiamine biosynthesis protein ThiI</fullName>
    </alternativeName>
    <alternativeName>
        <fullName evidence="1">tRNA 4-thiouridine synthase</fullName>
    </alternativeName>
</protein>
<evidence type="ECO:0000255" key="1">
    <source>
        <dbReference type="HAMAP-Rule" id="MF_00021"/>
    </source>
</evidence>
<feature type="chain" id="PRO_0000154873" description="Probable tRNA sulfurtransferase">
    <location>
        <begin position="1"/>
        <end position="405"/>
    </location>
</feature>
<feature type="domain" description="THUMP" evidence="1">
    <location>
        <begin position="60"/>
        <end position="165"/>
    </location>
</feature>
<feature type="binding site" evidence="1">
    <location>
        <begin position="183"/>
        <end position="184"/>
    </location>
    <ligand>
        <name>ATP</name>
        <dbReference type="ChEBI" id="CHEBI:30616"/>
    </ligand>
</feature>
<feature type="binding site" evidence="1">
    <location>
        <begin position="208"/>
        <end position="209"/>
    </location>
    <ligand>
        <name>ATP</name>
        <dbReference type="ChEBI" id="CHEBI:30616"/>
    </ligand>
</feature>
<feature type="binding site" evidence="1">
    <location>
        <position position="265"/>
    </location>
    <ligand>
        <name>ATP</name>
        <dbReference type="ChEBI" id="CHEBI:30616"/>
    </ligand>
</feature>
<feature type="binding site" evidence="1">
    <location>
        <position position="287"/>
    </location>
    <ligand>
        <name>ATP</name>
        <dbReference type="ChEBI" id="CHEBI:30616"/>
    </ligand>
</feature>
<feature type="binding site" evidence="1">
    <location>
        <position position="296"/>
    </location>
    <ligand>
        <name>ATP</name>
        <dbReference type="ChEBI" id="CHEBI:30616"/>
    </ligand>
</feature>
<accession>Q8DUR1</accession>
<comment type="function">
    <text evidence="1">Catalyzes the ATP-dependent transfer of a sulfur to tRNA to produce 4-thiouridine in position 8 of tRNAs, which functions as a near-UV photosensor. Also catalyzes the transfer of sulfur to the sulfur carrier protein ThiS, forming ThiS-thiocarboxylate. This is a step in the synthesis of thiazole, in the thiamine biosynthesis pathway. The sulfur is donated as persulfide by IscS.</text>
</comment>
<comment type="catalytic activity">
    <reaction evidence="1">
        <text>[ThiI sulfur-carrier protein]-S-sulfanyl-L-cysteine + a uridine in tRNA + 2 reduced [2Fe-2S]-[ferredoxin] + ATP + H(+) = [ThiI sulfur-carrier protein]-L-cysteine + a 4-thiouridine in tRNA + 2 oxidized [2Fe-2S]-[ferredoxin] + AMP + diphosphate</text>
        <dbReference type="Rhea" id="RHEA:24176"/>
        <dbReference type="Rhea" id="RHEA-COMP:10000"/>
        <dbReference type="Rhea" id="RHEA-COMP:10001"/>
        <dbReference type="Rhea" id="RHEA-COMP:13337"/>
        <dbReference type="Rhea" id="RHEA-COMP:13338"/>
        <dbReference type="Rhea" id="RHEA-COMP:13339"/>
        <dbReference type="Rhea" id="RHEA-COMP:13340"/>
        <dbReference type="ChEBI" id="CHEBI:15378"/>
        <dbReference type="ChEBI" id="CHEBI:29950"/>
        <dbReference type="ChEBI" id="CHEBI:30616"/>
        <dbReference type="ChEBI" id="CHEBI:33019"/>
        <dbReference type="ChEBI" id="CHEBI:33737"/>
        <dbReference type="ChEBI" id="CHEBI:33738"/>
        <dbReference type="ChEBI" id="CHEBI:61963"/>
        <dbReference type="ChEBI" id="CHEBI:65315"/>
        <dbReference type="ChEBI" id="CHEBI:136798"/>
        <dbReference type="ChEBI" id="CHEBI:456215"/>
        <dbReference type="EC" id="2.8.1.4"/>
    </reaction>
</comment>
<comment type="catalytic activity">
    <reaction evidence="1">
        <text>[ThiS sulfur-carrier protein]-C-terminal Gly-Gly-AMP + S-sulfanyl-L-cysteinyl-[cysteine desulfurase] + AH2 = [ThiS sulfur-carrier protein]-C-terminal-Gly-aminoethanethioate + L-cysteinyl-[cysteine desulfurase] + A + AMP + 2 H(+)</text>
        <dbReference type="Rhea" id="RHEA:43340"/>
        <dbReference type="Rhea" id="RHEA-COMP:12157"/>
        <dbReference type="Rhea" id="RHEA-COMP:12158"/>
        <dbReference type="Rhea" id="RHEA-COMP:12910"/>
        <dbReference type="Rhea" id="RHEA-COMP:19908"/>
        <dbReference type="ChEBI" id="CHEBI:13193"/>
        <dbReference type="ChEBI" id="CHEBI:15378"/>
        <dbReference type="ChEBI" id="CHEBI:17499"/>
        <dbReference type="ChEBI" id="CHEBI:29950"/>
        <dbReference type="ChEBI" id="CHEBI:61963"/>
        <dbReference type="ChEBI" id="CHEBI:90618"/>
        <dbReference type="ChEBI" id="CHEBI:232372"/>
        <dbReference type="ChEBI" id="CHEBI:456215"/>
    </reaction>
</comment>
<comment type="pathway">
    <text evidence="1">Cofactor biosynthesis; thiamine diphosphate biosynthesis.</text>
</comment>
<comment type="subcellular location">
    <subcellularLocation>
        <location evidence="1">Cytoplasm</location>
    </subcellularLocation>
</comment>
<comment type="similarity">
    <text evidence="1">Belongs to the ThiI family.</text>
</comment>
<reference key="1">
    <citation type="journal article" date="2002" name="Proc. Natl. Acad. Sci. U.S.A.">
        <title>Genome sequence of Streptococcus mutans UA159, a cariogenic dental pathogen.</title>
        <authorList>
            <person name="Ajdic D.J."/>
            <person name="McShan W.M."/>
            <person name="McLaughlin R.E."/>
            <person name="Savic G."/>
            <person name="Chang J."/>
            <person name="Carson M.B."/>
            <person name="Primeaux C."/>
            <person name="Tian R."/>
            <person name="Kenton S."/>
            <person name="Jia H.G."/>
            <person name="Lin S.P."/>
            <person name="Qian Y."/>
            <person name="Li S."/>
            <person name="Zhu H."/>
            <person name="Najar F.Z."/>
            <person name="Lai H."/>
            <person name="White J."/>
            <person name="Roe B.A."/>
            <person name="Ferretti J.J."/>
        </authorList>
    </citation>
    <scope>NUCLEOTIDE SEQUENCE [LARGE SCALE GENOMIC DNA]</scope>
    <source>
        <strain>ATCC 700610 / UA159</strain>
    </source>
</reference>
<gene>
    <name evidence="1" type="primary">thiI</name>
    <name type="ordered locus">SMU_842</name>
</gene>
<dbReference type="EC" id="2.8.1.4" evidence="1"/>
<dbReference type="EMBL" id="AE014133">
    <property type="protein sequence ID" value="AAN58558.1"/>
    <property type="molecule type" value="Genomic_DNA"/>
</dbReference>
<dbReference type="RefSeq" id="NP_721252.1">
    <property type="nucleotide sequence ID" value="NC_004350.2"/>
</dbReference>
<dbReference type="RefSeq" id="WP_002261992.1">
    <property type="nucleotide sequence ID" value="NC_004350.2"/>
</dbReference>
<dbReference type="SMR" id="Q8DUR1"/>
<dbReference type="STRING" id="210007.SMU_842"/>
<dbReference type="KEGG" id="smu:SMU_842"/>
<dbReference type="PATRIC" id="fig|210007.7.peg.749"/>
<dbReference type="eggNOG" id="COG0301">
    <property type="taxonomic scope" value="Bacteria"/>
</dbReference>
<dbReference type="HOGENOM" id="CLU_037952_4_0_9"/>
<dbReference type="OrthoDB" id="9773948at2"/>
<dbReference type="PhylomeDB" id="Q8DUR1"/>
<dbReference type="UniPathway" id="UPA00060"/>
<dbReference type="Proteomes" id="UP000002512">
    <property type="component" value="Chromosome"/>
</dbReference>
<dbReference type="GO" id="GO:0005829">
    <property type="term" value="C:cytosol"/>
    <property type="evidence" value="ECO:0007669"/>
    <property type="project" value="TreeGrafter"/>
</dbReference>
<dbReference type="GO" id="GO:0005524">
    <property type="term" value="F:ATP binding"/>
    <property type="evidence" value="ECO:0007669"/>
    <property type="project" value="UniProtKB-UniRule"/>
</dbReference>
<dbReference type="GO" id="GO:0004810">
    <property type="term" value="F:CCA tRNA nucleotidyltransferase activity"/>
    <property type="evidence" value="ECO:0007669"/>
    <property type="project" value="InterPro"/>
</dbReference>
<dbReference type="GO" id="GO:0000049">
    <property type="term" value="F:tRNA binding"/>
    <property type="evidence" value="ECO:0007669"/>
    <property type="project" value="UniProtKB-UniRule"/>
</dbReference>
<dbReference type="GO" id="GO:0140741">
    <property type="term" value="F:tRNA-uracil-4 sulfurtransferase activity"/>
    <property type="evidence" value="ECO:0007669"/>
    <property type="project" value="UniProtKB-EC"/>
</dbReference>
<dbReference type="GO" id="GO:0009228">
    <property type="term" value="P:thiamine biosynthetic process"/>
    <property type="evidence" value="ECO:0007669"/>
    <property type="project" value="UniProtKB-KW"/>
</dbReference>
<dbReference type="GO" id="GO:0009229">
    <property type="term" value="P:thiamine diphosphate biosynthetic process"/>
    <property type="evidence" value="ECO:0007669"/>
    <property type="project" value="UniProtKB-UniRule"/>
</dbReference>
<dbReference type="GO" id="GO:0052837">
    <property type="term" value="P:thiazole biosynthetic process"/>
    <property type="evidence" value="ECO:0007669"/>
    <property type="project" value="TreeGrafter"/>
</dbReference>
<dbReference type="GO" id="GO:0002937">
    <property type="term" value="P:tRNA 4-thiouridine biosynthesis"/>
    <property type="evidence" value="ECO:0007669"/>
    <property type="project" value="TreeGrafter"/>
</dbReference>
<dbReference type="CDD" id="cd01712">
    <property type="entry name" value="PPase_ThiI"/>
    <property type="match status" value="1"/>
</dbReference>
<dbReference type="CDD" id="cd11716">
    <property type="entry name" value="THUMP_ThiI"/>
    <property type="match status" value="1"/>
</dbReference>
<dbReference type="FunFam" id="3.40.50.620:FF:000053">
    <property type="entry name" value="Probable tRNA sulfurtransferase"/>
    <property type="match status" value="1"/>
</dbReference>
<dbReference type="Gene3D" id="3.30.2130.30">
    <property type="match status" value="1"/>
</dbReference>
<dbReference type="Gene3D" id="3.40.50.620">
    <property type="entry name" value="HUPs"/>
    <property type="match status" value="1"/>
</dbReference>
<dbReference type="HAMAP" id="MF_00021">
    <property type="entry name" value="ThiI"/>
    <property type="match status" value="1"/>
</dbReference>
<dbReference type="InterPro" id="IPR014729">
    <property type="entry name" value="Rossmann-like_a/b/a_fold"/>
</dbReference>
<dbReference type="InterPro" id="IPR020536">
    <property type="entry name" value="ThiI_AANH"/>
</dbReference>
<dbReference type="InterPro" id="IPR054173">
    <property type="entry name" value="ThiI_fer"/>
</dbReference>
<dbReference type="InterPro" id="IPR049961">
    <property type="entry name" value="ThiI_N"/>
</dbReference>
<dbReference type="InterPro" id="IPR004114">
    <property type="entry name" value="THUMP_dom"/>
</dbReference>
<dbReference type="InterPro" id="IPR049962">
    <property type="entry name" value="THUMP_ThiI"/>
</dbReference>
<dbReference type="InterPro" id="IPR003720">
    <property type="entry name" value="tRNA_STrfase"/>
</dbReference>
<dbReference type="InterPro" id="IPR050102">
    <property type="entry name" value="tRNA_sulfurtransferase_ThiI"/>
</dbReference>
<dbReference type="NCBIfam" id="TIGR00342">
    <property type="entry name" value="tRNA uracil 4-sulfurtransferase ThiI"/>
    <property type="match status" value="1"/>
</dbReference>
<dbReference type="PANTHER" id="PTHR43209">
    <property type="entry name" value="TRNA SULFURTRANSFERASE"/>
    <property type="match status" value="1"/>
</dbReference>
<dbReference type="PANTHER" id="PTHR43209:SF1">
    <property type="entry name" value="TRNA SULFURTRANSFERASE"/>
    <property type="match status" value="1"/>
</dbReference>
<dbReference type="Pfam" id="PF02568">
    <property type="entry name" value="ThiI"/>
    <property type="match status" value="1"/>
</dbReference>
<dbReference type="Pfam" id="PF22025">
    <property type="entry name" value="ThiI_fer"/>
    <property type="match status" value="1"/>
</dbReference>
<dbReference type="Pfam" id="PF02926">
    <property type="entry name" value="THUMP"/>
    <property type="match status" value="1"/>
</dbReference>
<dbReference type="SMART" id="SM00981">
    <property type="entry name" value="THUMP"/>
    <property type="match status" value="1"/>
</dbReference>
<dbReference type="SUPFAM" id="SSF52402">
    <property type="entry name" value="Adenine nucleotide alpha hydrolases-like"/>
    <property type="match status" value="1"/>
</dbReference>
<dbReference type="SUPFAM" id="SSF143437">
    <property type="entry name" value="THUMP domain-like"/>
    <property type="match status" value="1"/>
</dbReference>
<dbReference type="PROSITE" id="PS51165">
    <property type="entry name" value="THUMP"/>
    <property type="match status" value="1"/>
</dbReference>
<sequence length="405" mass="45104">MQYSEIMVRYGELSTKGKNRMRFINQLKRNMKHVLSIYPEVSIRADRDRAHIYLNGANYVPVAESLKQIFGIQAFSPSYKVEKSVPALEKAVQAIMVELHHEGLTFKISSKRSDHQFELDSRELNQVLGSAVFAVLPDIKAQMNHPNVNLKVEIREEAAYLSYENIKGAGGLPVGTAGKGMLMLSGGIDSPVAGYLALKRGVNIEAVHFASPPYTSPGALKKAQDLTRKLTKFGGNIQFIEVPFTEIQEEIKAKAPEAYLMTLTRRFMMRIADRIREERSGLVIINGESLGQVASQTLESMQAINAVTTTPVIRPVVTMDKLEIIDIAEKIDTFAISIQPFEDCCTIFAPDRPKTNPKIKNVEQYEARLDIEGLVARAVAGINITEITPQEESQDEVDVLIEDLL</sequence>
<keyword id="KW-0067">ATP-binding</keyword>
<keyword id="KW-0963">Cytoplasm</keyword>
<keyword id="KW-0547">Nucleotide-binding</keyword>
<keyword id="KW-1185">Reference proteome</keyword>
<keyword id="KW-0694">RNA-binding</keyword>
<keyword id="KW-0784">Thiamine biosynthesis</keyword>
<keyword id="KW-0808">Transferase</keyword>
<keyword id="KW-0820">tRNA-binding</keyword>